<reference key="1">
    <citation type="journal article" date="2001" name="Proc. Natl. Acad. Sci. U.S.A.">
        <title>Complete genome sequence of an M1 strain of Streptococcus pyogenes.</title>
        <authorList>
            <person name="Ferretti J.J."/>
            <person name="McShan W.M."/>
            <person name="Ajdic D.J."/>
            <person name="Savic D.J."/>
            <person name="Savic G."/>
            <person name="Lyon K."/>
            <person name="Primeaux C."/>
            <person name="Sezate S."/>
            <person name="Suvorov A.N."/>
            <person name="Kenton S."/>
            <person name="Lai H.S."/>
            <person name="Lin S.P."/>
            <person name="Qian Y."/>
            <person name="Jia H.G."/>
            <person name="Najar F.Z."/>
            <person name="Ren Q."/>
            <person name="Zhu H."/>
            <person name="Song L."/>
            <person name="White J."/>
            <person name="Yuan X."/>
            <person name="Clifton S.W."/>
            <person name="Roe B.A."/>
            <person name="McLaughlin R.E."/>
        </authorList>
    </citation>
    <scope>NUCLEOTIDE SEQUENCE [LARGE SCALE GENOMIC DNA]</scope>
    <source>
        <strain>ATCC 700294 / SF370 / Serotype M1</strain>
    </source>
</reference>
<reference key="2">
    <citation type="journal article" date="2005" name="J. Infect. Dis.">
        <title>Evolutionary origin and emergence of a highly successful clone of serotype M1 group A Streptococcus involved multiple horizontal gene transfer events.</title>
        <authorList>
            <person name="Sumby P."/>
            <person name="Porcella S.F."/>
            <person name="Madrigal A.G."/>
            <person name="Barbian K.D."/>
            <person name="Virtaneva K."/>
            <person name="Ricklefs S.M."/>
            <person name="Sturdevant D.E."/>
            <person name="Graham M.R."/>
            <person name="Vuopio-Varkila J."/>
            <person name="Hoe N.P."/>
            <person name="Musser J.M."/>
        </authorList>
    </citation>
    <scope>NUCLEOTIDE SEQUENCE [LARGE SCALE GENOMIC DNA]</scope>
    <source>
        <strain>ATCC BAA-947 / MGAS5005 / Serotype M1</strain>
    </source>
</reference>
<proteinExistence type="inferred from homology"/>
<sequence length="351" mass="38535">MKNSNKLIASVVTLASVMALAACQSTNDNTKVISMKGDTISVSDFYNETKNTEVSQKAMLNLVISRVFEAQYGDKVSKKEVEKAYHKTAEQYGASFSAALAQSSLTPETFKRQIRSSKLVEYAVKEAAKKELTTQEYKKAYESYTPTMAVEMITLDNEETAKSVLEELKAEGADFTAIAKEKTTTPEKKVTYKFDSGATNVPTDVVKAASSLNEGGISDVISVLDPTSYQKKFYIVKVTKKAEKKSDWQEYKKRLKAIIIAEKSKDMNFQNKVIANALDKANVKIKDKAFANILAQYANLGQKTKAASESSTTSESSKAAEENPSESEQTQTSSAEEPTETEAQTQEPAAQ</sequence>
<accession>P60811</accession>
<accession>Q48Y24</accession>
<accession>Q99Z56</accession>
<dbReference type="EC" id="5.2.1.8"/>
<dbReference type="EMBL" id="AE004092">
    <property type="protein sequence ID" value="AAK34209.1"/>
    <property type="molecule type" value="Genomic_DNA"/>
</dbReference>
<dbReference type="EMBL" id="CP000017">
    <property type="protein sequence ID" value="AAZ51751.1"/>
    <property type="molecule type" value="Genomic_DNA"/>
</dbReference>
<dbReference type="RefSeq" id="NP_269488.1">
    <property type="nucleotide sequence ID" value="NC_002737.2"/>
</dbReference>
<dbReference type="SMR" id="P60811"/>
<dbReference type="PaxDb" id="1314-HKU360_01169"/>
<dbReference type="KEGG" id="spy:SPy_1390"/>
<dbReference type="KEGG" id="spz:M5005_Spy1133"/>
<dbReference type="PATRIC" id="fig|160490.10.peg.1212"/>
<dbReference type="HOGENOM" id="CLU_034646_6_0_9"/>
<dbReference type="OMA" id="TMKGSTI"/>
<dbReference type="Proteomes" id="UP000000750">
    <property type="component" value="Chromosome"/>
</dbReference>
<dbReference type="GO" id="GO:0005886">
    <property type="term" value="C:plasma membrane"/>
    <property type="evidence" value="ECO:0007669"/>
    <property type="project" value="UniProtKB-SubCell"/>
</dbReference>
<dbReference type="GO" id="GO:0003755">
    <property type="term" value="F:peptidyl-prolyl cis-trans isomerase activity"/>
    <property type="evidence" value="ECO:0007669"/>
    <property type="project" value="UniProtKB-UniRule"/>
</dbReference>
<dbReference type="GO" id="GO:0006457">
    <property type="term" value="P:protein folding"/>
    <property type="evidence" value="ECO:0007669"/>
    <property type="project" value="UniProtKB-UniRule"/>
</dbReference>
<dbReference type="Gene3D" id="3.10.50.40">
    <property type="match status" value="1"/>
</dbReference>
<dbReference type="HAMAP" id="MF_01145">
    <property type="entry name" value="Foldase_PrsA"/>
    <property type="match status" value="1"/>
</dbReference>
<dbReference type="InterPro" id="IPR023059">
    <property type="entry name" value="Foldase_PrsA"/>
</dbReference>
<dbReference type="InterPro" id="IPR046357">
    <property type="entry name" value="PPIase_dom_sf"/>
</dbReference>
<dbReference type="InterPro" id="IPR000297">
    <property type="entry name" value="PPIase_PpiC"/>
</dbReference>
<dbReference type="InterPro" id="IPR050245">
    <property type="entry name" value="PrsA_foldase"/>
</dbReference>
<dbReference type="InterPro" id="IPR027304">
    <property type="entry name" value="Trigger_fact/SurA_dom_sf"/>
</dbReference>
<dbReference type="NCBIfam" id="NF002361">
    <property type="entry name" value="PRK01326.1"/>
    <property type="match status" value="1"/>
</dbReference>
<dbReference type="NCBIfam" id="NF009105">
    <property type="entry name" value="PRK12450.1"/>
    <property type="match status" value="1"/>
</dbReference>
<dbReference type="PANTHER" id="PTHR47245:SF1">
    <property type="entry name" value="FOLDASE PROTEIN PRSA"/>
    <property type="match status" value="1"/>
</dbReference>
<dbReference type="PANTHER" id="PTHR47245">
    <property type="entry name" value="PEPTIDYLPROLYL ISOMERASE"/>
    <property type="match status" value="1"/>
</dbReference>
<dbReference type="Pfam" id="PF13145">
    <property type="entry name" value="Rotamase_2"/>
    <property type="match status" value="1"/>
</dbReference>
<dbReference type="SUPFAM" id="SSF54534">
    <property type="entry name" value="FKBP-like"/>
    <property type="match status" value="1"/>
</dbReference>
<dbReference type="SUPFAM" id="SSF109998">
    <property type="entry name" value="Triger factor/SurA peptide-binding domain-like"/>
    <property type="match status" value="1"/>
</dbReference>
<dbReference type="PROSITE" id="PS50198">
    <property type="entry name" value="PPIC_PPIASE_2"/>
    <property type="match status" value="1"/>
</dbReference>
<dbReference type="PROSITE" id="PS51257">
    <property type="entry name" value="PROKAR_LIPOPROTEIN"/>
    <property type="match status" value="1"/>
</dbReference>
<comment type="function">
    <text evidence="1">Plays a major role in protein secretion by helping the post-translocational extracellular folding of several secreted proteins.</text>
</comment>
<comment type="catalytic activity">
    <reaction>
        <text>[protein]-peptidylproline (omega=180) = [protein]-peptidylproline (omega=0)</text>
        <dbReference type="Rhea" id="RHEA:16237"/>
        <dbReference type="Rhea" id="RHEA-COMP:10747"/>
        <dbReference type="Rhea" id="RHEA-COMP:10748"/>
        <dbReference type="ChEBI" id="CHEBI:83833"/>
        <dbReference type="ChEBI" id="CHEBI:83834"/>
        <dbReference type="EC" id="5.2.1.8"/>
    </reaction>
</comment>
<comment type="subcellular location">
    <subcellularLocation>
        <location evidence="4">Cell membrane</location>
        <topology evidence="4">Lipid-anchor</topology>
    </subcellularLocation>
</comment>
<comment type="similarity">
    <text evidence="4">Belongs to the PrsA family.</text>
</comment>
<evidence type="ECO:0000250" key="1"/>
<evidence type="ECO:0000255" key="2"/>
<evidence type="ECO:0000256" key="3">
    <source>
        <dbReference type="SAM" id="MobiDB-lite"/>
    </source>
</evidence>
<evidence type="ECO:0000305" key="4"/>
<feature type="signal peptide" evidence="2">
    <location>
        <begin position="1"/>
        <end position="22"/>
    </location>
</feature>
<feature type="chain" id="PRO_0000029329" description="Foldase protein PrsA 1">
    <location>
        <begin position="23"/>
        <end position="351"/>
    </location>
</feature>
<feature type="domain" description="PpiC">
    <location>
        <begin position="145"/>
        <end position="240"/>
    </location>
</feature>
<feature type="region of interest" description="Disordered" evidence="3">
    <location>
        <begin position="303"/>
        <end position="351"/>
    </location>
</feature>
<feature type="compositionally biased region" description="Low complexity" evidence="3">
    <location>
        <begin position="303"/>
        <end position="317"/>
    </location>
</feature>
<feature type="compositionally biased region" description="Low complexity" evidence="3">
    <location>
        <begin position="326"/>
        <end position="351"/>
    </location>
</feature>
<feature type="lipid moiety-binding region" description="N-palmitoyl cysteine" evidence="2">
    <location>
        <position position="23"/>
    </location>
</feature>
<feature type="lipid moiety-binding region" description="S-diacylglycerol cysteine" evidence="2">
    <location>
        <position position="23"/>
    </location>
</feature>
<name>PRSA1_STRP1</name>
<gene>
    <name type="primary">prsA1</name>
    <name type="ordered locus">SPy_1390</name>
    <name type="ordered locus">M5005_Spy1133</name>
</gene>
<organism>
    <name type="scientific">Streptococcus pyogenes serotype M1</name>
    <dbReference type="NCBI Taxonomy" id="301447"/>
    <lineage>
        <taxon>Bacteria</taxon>
        <taxon>Bacillati</taxon>
        <taxon>Bacillota</taxon>
        <taxon>Bacilli</taxon>
        <taxon>Lactobacillales</taxon>
        <taxon>Streptococcaceae</taxon>
        <taxon>Streptococcus</taxon>
    </lineage>
</organism>
<keyword id="KW-1003">Cell membrane</keyword>
<keyword id="KW-0413">Isomerase</keyword>
<keyword id="KW-0449">Lipoprotein</keyword>
<keyword id="KW-0472">Membrane</keyword>
<keyword id="KW-0564">Palmitate</keyword>
<keyword id="KW-1185">Reference proteome</keyword>
<keyword id="KW-0697">Rotamase</keyword>
<keyword id="KW-0732">Signal</keyword>
<protein>
    <recommendedName>
        <fullName>Foldase protein PrsA 1</fullName>
        <ecNumber>5.2.1.8</ecNumber>
    </recommendedName>
</protein>